<proteinExistence type="inferred from homology"/>
<feature type="chain" id="PRO_1000045755" description="Photosystem II reaction center protein Y">
    <location>
        <begin position="1"/>
        <end position="39"/>
    </location>
</feature>
<feature type="transmembrane region" description="Helical" evidence="1">
    <location>
        <begin position="7"/>
        <end position="25"/>
    </location>
</feature>
<dbReference type="EMBL" id="CP000393">
    <property type="protein sequence ID" value="ABG53471.1"/>
    <property type="molecule type" value="Genomic_DNA"/>
</dbReference>
<dbReference type="RefSeq" id="WP_011613793.1">
    <property type="nucleotide sequence ID" value="NC_008312.1"/>
</dbReference>
<dbReference type="SMR" id="Q10WA3"/>
<dbReference type="STRING" id="203124.Tery_4485"/>
<dbReference type="KEGG" id="ter:Tery_4485"/>
<dbReference type="eggNOG" id="ENOG5033BVG">
    <property type="taxonomic scope" value="Bacteria"/>
</dbReference>
<dbReference type="HOGENOM" id="CLU_218393_1_0_3"/>
<dbReference type="GO" id="GO:0009523">
    <property type="term" value="C:photosystem II"/>
    <property type="evidence" value="ECO:0007669"/>
    <property type="project" value="UniProtKB-KW"/>
</dbReference>
<dbReference type="GO" id="GO:0031676">
    <property type="term" value="C:plasma membrane-derived thylakoid membrane"/>
    <property type="evidence" value="ECO:0007669"/>
    <property type="project" value="UniProtKB-SubCell"/>
</dbReference>
<dbReference type="GO" id="GO:0030145">
    <property type="term" value="F:manganese ion binding"/>
    <property type="evidence" value="ECO:0007669"/>
    <property type="project" value="InterPro"/>
</dbReference>
<dbReference type="GO" id="GO:0015979">
    <property type="term" value="P:photosynthesis"/>
    <property type="evidence" value="ECO:0007669"/>
    <property type="project" value="UniProtKB-UniRule"/>
</dbReference>
<dbReference type="HAMAP" id="MF_00717">
    <property type="entry name" value="PSII_PsbY"/>
    <property type="match status" value="1"/>
</dbReference>
<dbReference type="InterPro" id="IPR009388">
    <property type="entry name" value="PSII_PsbY"/>
</dbReference>
<dbReference type="NCBIfam" id="NF009711">
    <property type="entry name" value="PRK13240.1"/>
    <property type="match status" value="1"/>
</dbReference>
<dbReference type="Pfam" id="PF06298">
    <property type="entry name" value="PsbY"/>
    <property type="match status" value="1"/>
</dbReference>
<gene>
    <name evidence="1" type="primary">psbY</name>
    <name type="ordered locus">Tery_4485</name>
</gene>
<accession>Q10WA3</accession>
<evidence type="ECO:0000255" key="1">
    <source>
        <dbReference type="HAMAP-Rule" id="MF_00717"/>
    </source>
</evidence>
<keyword id="KW-0472">Membrane</keyword>
<keyword id="KW-0602">Photosynthesis</keyword>
<keyword id="KW-0604">Photosystem II</keyword>
<keyword id="KW-0793">Thylakoid</keyword>
<keyword id="KW-0812">Transmembrane</keyword>
<keyword id="KW-1133">Transmembrane helix</keyword>
<comment type="function">
    <text evidence="1">Loosely associated component of the core of photosystem II (PSII), it is not always seen in crystals. PSII is a light-driven water plastoquinone oxidoreductase, using light energy to abstract electrons from H(2)O, generating a proton gradient subsequently used for ATP formation.</text>
</comment>
<comment type="subunit">
    <text evidence="1">PSII is composed of 1 copy each of membrane proteins PsbA, PsbB, PsbC, PsbD, PsbE, PsbF, PsbH, PsbI, PsbJ, PsbK, PsbL, PsbM, PsbT, PsbX, PsbY, PsbZ, Psb30/Ycf12, peripheral proteins PsbO, CyanoQ (PsbQ), PsbU, PsbV and a large number of cofactors. It forms dimeric complexes.</text>
</comment>
<comment type="subcellular location">
    <subcellularLocation>
        <location evidence="1">Cellular thylakoid membrane</location>
        <topology evidence="1">Single-pass membrane protein</topology>
    </subcellularLocation>
</comment>
<comment type="similarity">
    <text evidence="1">Belongs to the PsbY family.</text>
</comment>
<sequence>MDFDFRLLIVLLPILAAAGWAVFNIGVVAMQQFQKFLNK</sequence>
<name>PSBY_TRIEI</name>
<organism>
    <name type="scientific">Trichodesmium erythraeum (strain IMS101)</name>
    <dbReference type="NCBI Taxonomy" id="203124"/>
    <lineage>
        <taxon>Bacteria</taxon>
        <taxon>Bacillati</taxon>
        <taxon>Cyanobacteriota</taxon>
        <taxon>Cyanophyceae</taxon>
        <taxon>Oscillatoriophycideae</taxon>
        <taxon>Oscillatoriales</taxon>
        <taxon>Microcoleaceae</taxon>
        <taxon>Trichodesmium</taxon>
    </lineage>
</organism>
<protein>
    <recommendedName>
        <fullName evidence="1">Photosystem II reaction center protein Y</fullName>
    </recommendedName>
</protein>
<reference key="1">
    <citation type="journal article" date="2015" name="Proc. Natl. Acad. Sci. U.S.A.">
        <title>Trichodesmium genome maintains abundant, widespread noncoding DNA in situ, despite oligotrophic lifestyle.</title>
        <authorList>
            <person name="Walworth N."/>
            <person name="Pfreundt U."/>
            <person name="Nelson W.C."/>
            <person name="Mincer T."/>
            <person name="Heidelberg J.F."/>
            <person name="Fu F."/>
            <person name="Waterbury J.B."/>
            <person name="Glavina del Rio T."/>
            <person name="Goodwin L."/>
            <person name="Kyrpides N.C."/>
            <person name="Land M.L."/>
            <person name="Woyke T."/>
            <person name="Hutchins D.A."/>
            <person name="Hess W.R."/>
            <person name="Webb E.A."/>
        </authorList>
    </citation>
    <scope>NUCLEOTIDE SEQUENCE [LARGE SCALE GENOMIC DNA]</scope>
    <source>
        <strain>IMS101</strain>
    </source>
</reference>